<comment type="function">
    <text evidence="1">Endonuclease that specifically degrades the RNA of RNA-DNA hybrids.</text>
</comment>
<comment type="catalytic activity">
    <reaction evidence="1">
        <text>Endonucleolytic cleavage to 5'-phosphomonoester.</text>
        <dbReference type="EC" id="3.1.26.4"/>
    </reaction>
</comment>
<comment type="cofactor">
    <cofactor evidence="1">
        <name>Mg(2+)</name>
        <dbReference type="ChEBI" id="CHEBI:18420"/>
    </cofactor>
    <text evidence="1">Binds 1 Mg(2+) ion per subunit. May bind a second metal ion at a regulatory site, or after substrate binding.</text>
</comment>
<comment type="subunit">
    <text evidence="1">Monomer.</text>
</comment>
<comment type="subcellular location">
    <subcellularLocation>
        <location evidence="1">Cytoplasm</location>
    </subcellularLocation>
</comment>
<comment type="similarity">
    <text evidence="1">Belongs to the RNase H family.</text>
</comment>
<keyword id="KW-0963">Cytoplasm</keyword>
<keyword id="KW-0255">Endonuclease</keyword>
<keyword id="KW-0378">Hydrolase</keyword>
<keyword id="KW-0460">Magnesium</keyword>
<keyword id="KW-0479">Metal-binding</keyword>
<keyword id="KW-0540">Nuclease</keyword>
<keyword id="KW-1185">Reference proteome</keyword>
<sequence>MYKQIEIFTDGSCLGNPGPGGCAGILRYRQYKKEFSAGYHITTNNRMELMAAIIALESLKNSCQIILYSDSQYLLTGITQWIQIWKKHHWKTADSKLVKNIDLWRRLDIAIQPHNIKDWRWLKSHTGHPDNERCDQLARKAAKYPLNKDFDNNPVVLYNDNDLMKID</sequence>
<proteinExistence type="inferred from homology"/>
<organism>
    <name type="scientific">Blochmanniella floridana</name>
    <dbReference type="NCBI Taxonomy" id="203907"/>
    <lineage>
        <taxon>Bacteria</taxon>
        <taxon>Pseudomonadati</taxon>
        <taxon>Pseudomonadota</taxon>
        <taxon>Gammaproteobacteria</taxon>
        <taxon>Enterobacterales</taxon>
        <taxon>Enterobacteriaceae</taxon>
        <taxon>ant endosymbionts</taxon>
        <taxon>Candidatus Blochmanniella</taxon>
    </lineage>
</organism>
<reference key="1">
    <citation type="journal article" date="2003" name="Proc. Natl. Acad. Sci. U.S.A.">
        <title>The genome sequence of Blochmannia floridanus: comparative analysis of reduced genomes.</title>
        <authorList>
            <person name="Gil R."/>
            <person name="Silva F.J."/>
            <person name="Zientz E."/>
            <person name="Delmotte F."/>
            <person name="Gonzalez-Candelas F."/>
            <person name="Latorre A."/>
            <person name="Rausell C."/>
            <person name="Kamerbeek J."/>
            <person name="Gadau J."/>
            <person name="Hoelldobler B."/>
            <person name="van Ham R.C.H.J."/>
            <person name="Gross R."/>
            <person name="Moya A."/>
        </authorList>
    </citation>
    <scope>NUCLEOTIDE SEQUENCE [LARGE SCALE GENOMIC DNA]</scope>
</reference>
<accession>Q7VQB6</accession>
<protein>
    <recommendedName>
        <fullName evidence="1">Ribonuclease H</fullName>
        <shortName evidence="1">RNase H</shortName>
        <ecNumber evidence="1">3.1.26.4</ecNumber>
    </recommendedName>
</protein>
<feature type="chain" id="PRO_1000074634" description="Ribonuclease H">
    <location>
        <begin position="1"/>
        <end position="167"/>
    </location>
</feature>
<feature type="domain" description="RNase H type-1" evidence="2">
    <location>
        <begin position="1"/>
        <end position="143"/>
    </location>
</feature>
<feature type="binding site" evidence="1">
    <location>
        <position position="10"/>
    </location>
    <ligand>
        <name>Mg(2+)</name>
        <dbReference type="ChEBI" id="CHEBI:18420"/>
        <label>1</label>
    </ligand>
</feature>
<feature type="binding site" evidence="1">
    <location>
        <position position="10"/>
    </location>
    <ligand>
        <name>Mg(2+)</name>
        <dbReference type="ChEBI" id="CHEBI:18420"/>
        <label>2</label>
    </ligand>
</feature>
<feature type="binding site" evidence="1">
    <location>
        <position position="48"/>
    </location>
    <ligand>
        <name>Mg(2+)</name>
        <dbReference type="ChEBI" id="CHEBI:18420"/>
        <label>1</label>
    </ligand>
</feature>
<feature type="binding site" evidence="1">
    <location>
        <position position="70"/>
    </location>
    <ligand>
        <name>Mg(2+)</name>
        <dbReference type="ChEBI" id="CHEBI:18420"/>
        <label>1</label>
    </ligand>
</feature>
<feature type="binding site" evidence="1">
    <location>
        <position position="135"/>
    </location>
    <ligand>
        <name>Mg(2+)</name>
        <dbReference type="ChEBI" id="CHEBI:18420"/>
        <label>2</label>
    </ligand>
</feature>
<gene>
    <name evidence="1" type="primary">rnhA</name>
    <name type="ordered locus">Bfl224</name>
</gene>
<evidence type="ECO:0000255" key="1">
    <source>
        <dbReference type="HAMAP-Rule" id="MF_00042"/>
    </source>
</evidence>
<evidence type="ECO:0000255" key="2">
    <source>
        <dbReference type="PROSITE-ProRule" id="PRU00408"/>
    </source>
</evidence>
<dbReference type="EC" id="3.1.26.4" evidence="1"/>
<dbReference type="EMBL" id="BX248583">
    <property type="protein sequence ID" value="CAD83738.1"/>
    <property type="molecule type" value="Genomic_DNA"/>
</dbReference>
<dbReference type="SMR" id="Q7VQB6"/>
<dbReference type="STRING" id="203907.Bfl224"/>
<dbReference type="KEGG" id="bfl:Bfl224"/>
<dbReference type="eggNOG" id="COG0328">
    <property type="taxonomic scope" value="Bacteria"/>
</dbReference>
<dbReference type="HOGENOM" id="CLU_030894_6_0_6"/>
<dbReference type="OrthoDB" id="7845843at2"/>
<dbReference type="Proteomes" id="UP000002192">
    <property type="component" value="Chromosome"/>
</dbReference>
<dbReference type="GO" id="GO:0005737">
    <property type="term" value="C:cytoplasm"/>
    <property type="evidence" value="ECO:0007669"/>
    <property type="project" value="UniProtKB-SubCell"/>
</dbReference>
<dbReference type="GO" id="GO:0000287">
    <property type="term" value="F:magnesium ion binding"/>
    <property type="evidence" value="ECO:0007669"/>
    <property type="project" value="UniProtKB-UniRule"/>
</dbReference>
<dbReference type="GO" id="GO:0003676">
    <property type="term" value="F:nucleic acid binding"/>
    <property type="evidence" value="ECO:0007669"/>
    <property type="project" value="InterPro"/>
</dbReference>
<dbReference type="GO" id="GO:0004523">
    <property type="term" value="F:RNA-DNA hybrid ribonuclease activity"/>
    <property type="evidence" value="ECO:0007669"/>
    <property type="project" value="UniProtKB-UniRule"/>
</dbReference>
<dbReference type="GO" id="GO:0043137">
    <property type="term" value="P:DNA replication, removal of RNA primer"/>
    <property type="evidence" value="ECO:0007669"/>
    <property type="project" value="TreeGrafter"/>
</dbReference>
<dbReference type="CDD" id="cd09278">
    <property type="entry name" value="RNase_HI_prokaryote_like"/>
    <property type="match status" value="1"/>
</dbReference>
<dbReference type="Gene3D" id="3.30.420.10">
    <property type="entry name" value="Ribonuclease H-like superfamily/Ribonuclease H"/>
    <property type="match status" value="1"/>
</dbReference>
<dbReference type="HAMAP" id="MF_00042">
    <property type="entry name" value="RNase_H"/>
    <property type="match status" value="1"/>
</dbReference>
<dbReference type="InterPro" id="IPR050092">
    <property type="entry name" value="RNase_H"/>
</dbReference>
<dbReference type="InterPro" id="IPR012337">
    <property type="entry name" value="RNaseH-like_sf"/>
</dbReference>
<dbReference type="InterPro" id="IPR002156">
    <property type="entry name" value="RNaseH_domain"/>
</dbReference>
<dbReference type="InterPro" id="IPR036397">
    <property type="entry name" value="RNaseH_sf"/>
</dbReference>
<dbReference type="InterPro" id="IPR022892">
    <property type="entry name" value="RNaseHI"/>
</dbReference>
<dbReference type="NCBIfam" id="NF001236">
    <property type="entry name" value="PRK00203.1"/>
    <property type="match status" value="1"/>
</dbReference>
<dbReference type="PANTHER" id="PTHR10642">
    <property type="entry name" value="RIBONUCLEASE H1"/>
    <property type="match status" value="1"/>
</dbReference>
<dbReference type="PANTHER" id="PTHR10642:SF26">
    <property type="entry name" value="RIBONUCLEASE H1"/>
    <property type="match status" value="1"/>
</dbReference>
<dbReference type="Pfam" id="PF00075">
    <property type="entry name" value="RNase_H"/>
    <property type="match status" value="1"/>
</dbReference>
<dbReference type="SUPFAM" id="SSF53098">
    <property type="entry name" value="Ribonuclease H-like"/>
    <property type="match status" value="1"/>
</dbReference>
<dbReference type="PROSITE" id="PS50879">
    <property type="entry name" value="RNASE_H_1"/>
    <property type="match status" value="1"/>
</dbReference>
<name>RNH_BLOFL</name>